<accession>Q04776</accession>
<organism>
    <name type="scientific">Lactococcus phage mv4</name>
    <name type="common">Lactococcus delbrueckii bacteriophage mv4</name>
    <dbReference type="NCBI Taxonomy" id="12392"/>
    <lineage>
        <taxon>Viruses</taxon>
    </lineage>
</organism>
<sequence length="85" mass="9457">MSDLSVFSRMAQSTGSRSVRLQVLSQMHQDMEQYVPKRAGFLRSQSFVNDTGVHYTAKYARAVLRLCKWPPGTNYSTPGTAADGI</sequence>
<organismHost>
    <name type="scientific">Lactobacillus delbrueckii</name>
    <dbReference type="NCBI Taxonomy" id="1584"/>
</organismHost>
<dbReference type="EMBL" id="L02497">
    <property type="protein sequence ID" value="AAA56851.1"/>
    <property type="molecule type" value="Genomic_DNA"/>
</dbReference>
<dbReference type="PIR" id="B47756">
    <property type="entry name" value="B47756"/>
</dbReference>
<dbReference type="SMR" id="Q04776"/>
<dbReference type="InterPro" id="IPR021080">
    <property type="entry name" value="Minor_capsid_protein"/>
</dbReference>
<dbReference type="Pfam" id="PF11114">
    <property type="entry name" value="Minor_capsid_2"/>
    <property type="match status" value="1"/>
</dbReference>
<name>YG36_BPMV4</name>
<feature type="chain" id="PRO_0000066227" description="Uncharacterized protein ORF6">
    <location>
        <begin position="1"/>
        <end position="85"/>
    </location>
</feature>
<reference key="1">
    <citation type="journal article" date="1993" name="J. Virol.">
        <title>Molecular comparison of the structural proteins encoding gene clusters of two related Lactobacillus delbrueckii bacteriophages.</title>
        <authorList>
            <person name="Vasala A."/>
            <person name="Dupont L."/>
            <person name="Baumann M."/>
            <person name="Ritzenthaler P."/>
            <person name="Alatossava T."/>
        </authorList>
    </citation>
    <scope>NUCLEOTIDE SEQUENCE [GENOMIC DNA]</scope>
</reference>
<proteinExistence type="predicted"/>
<protein>
    <recommendedName>
        <fullName>Uncharacterized protein ORF6</fullName>
    </recommendedName>
</protein>